<name>KTHY_CHLFF</name>
<gene>
    <name evidence="1" type="primary">tmk</name>
    <name type="ordered locus">CF0500</name>
</gene>
<dbReference type="EC" id="2.7.4.9" evidence="1"/>
<dbReference type="EMBL" id="AP006861">
    <property type="protein sequence ID" value="BAE81272.1"/>
    <property type="molecule type" value="Genomic_DNA"/>
</dbReference>
<dbReference type="RefSeq" id="WP_011458052.1">
    <property type="nucleotide sequence ID" value="NC_007899.1"/>
</dbReference>
<dbReference type="SMR" id="Q254L6"/>
<dbReference type="STRING" id="264202.CF0500"/>
<dbReference type="KEGG" id="cfe:CF0500"/>
<dbReference type="eggNOG" id="COG0125">
    <property type="taxonomic scope" value="Bacteria"/>
</dbReference>
<dbReference type="HOGENOM" id="CLU_049131_0_2_0"/>
<dbReference type="OrthoDB" id="9774907at2"/>
<dbReference type="Proteomes" id="UP000001260">
    <property type="component" value="Chromosome"/>
</dbReference>
<dbReference type="GO" id="GO:0005829">
    <property type="term" value="C:cytosol"/>
    <property type="evidence" value="ECO:0007669"/>
    <property type="project" value="TreeGrafter"/>
</dbReference>
<dbReference type="GO" id="GO:0005524">
    <property type="term" value="F:ATP binding"/>
    <property type="evidence" value="ECO:0007669"/>
    <property type="project" value="UniProtKB-UniRule"/>
</dbReference>
<dbReference type="GO" id="GO:0004798">
    <property type="term" value="F:dTMP kinase activity"/>
    <property type="evidence" value="ECO:0007669"/>
    <property type="project" value="UniProtKB-UniRule"/>
</dbReference>
<dbReference type="GO" id="GO:0006233">
    <property type="term" value="P:dTDP biosynthetic process"/>
    <property type="evidence" value="ECO:0007669"/>
    <property type="project" value="InterPro"/>
</dbReference>
<dbReference type="GO" id="GO:0006235">
    <property type="term" value="P:dTTP biosynthetic process"/>
    <property type="evidence" value="ECO:0007669"/>
    <property type="project" value="UniProtKB-UniRule"/>
</dbReference>
<dbReference type="GO" id="GO:0006227">
    <property type="term" value="P:dUDP biosynthetic process"/>
    <property type="evidence" value="ECO:0007669"/>
    <property type="project" value="TreeGrafter"/>
</dbReference>
<dbReference type="CDD" id="cd01672">
    <property type="entry name" value="TMPK"/>
    <property type="match status" value="1"/>
</dbReference>
<dbReference type="FunFam" id="3.40.50.300:FF:000225">
    <property type="entry name" value="Thymidylate kinase"/>
    <property type="match status" value="1"/>
</dbReference>
<dbReference type="Gene3D" id="3.40.50.300">
    <property type="entry name" value="P-loop containing nucleotide triphosphate hydrolases"/>
    <property type="match status" value="1"/>
</dbReference>
<dbReference type="HAMAP" id="MF_00165">
    <property type="entry name" value="Thymidylate_kinase"/>
    <property type="match status" value="1"/>
</dbReference>
<dbReference type="InterPro" id="IPR027417">
    <property type="entry name" value="P-loop_NTPase"/>
</dbReference>
<dbReference type="InterPro" id="IPR039430">
    <property type="entry name" value="Thymidylate_kin-like_dom"/>
</dbReference>
<dbReference type="InterPro" id="IPR018095">
    <property type="entry name" value="Thymidylate_kin_CS"/>
</dbReference>
<dbReference type="InterPro" id="IPR018094">
    <property type="entry name" value="Thymidylate_kinase"/>
</dbReference>
<dbReference type="NCBIfam" id="TIGR00041">
    <property type="entry name" value="DTMP_kinase"/>
    <property type="match status" value="1"/>
</dbReference>
<dbReference type="PANTHER" id="PTHR10344">
    <property type="entry name" value="THYMIDYLATE KINASE"/>
    <property type="match status" value="1"/>
</dbReference>
<dbReference type="PANTHER" id="PTHR10344:SF4">
    <property type="entry name" value="UMP-CMP KINASE 2, MITOCHONDRIAL"/>
    <property type="match status" value="1"/>
</dbReference>
<dbReference type="Pfam" id="PF02223">
    <property type="entry name" value="Thymidylate_kin"/>
    <property type="match status" value="1"/>
</dbReference>
<dbReference type="SUPFAM" id="SSF52540">
    <property type="entry name" value="P-loop containing nucleoside triphosphate hydrolases"/>
    <property type="match status" value="1"/>
</dbReference>
<dbReference type="PROSITE" id="PS01331">
    <property type="entry name" value="THYMIDYLATE_KINASE"/>
    <property type="match status" value="1"/>
</dbReference>
<evidence type="ECO:0000255" key="1">
    <source>
        <dbReference type="HAMAP-Rule" id="MF_00165"/>
    </source>
</evidence>
<proteinExistence type="inferred from homology"/>
<feature type="chain" id="PRO_1000023174" description="Thymidylate kinase">
    <location>
        <begin position="1"/>
        <end position="207"/>
    </location>
</feature>
<feature type="binding site" evidence="1">
    <location>
        <begin position="7"/>
        <end position="14"/>
    </location>
    <ligand>
        <name>ATP</name>
        <dbReference type="ChEBI" id="CHEBI:30616"/>
    </ligand>
</feature>
<protein>
    <recommendedName>
        <fullName evidence="1">Thymidylate kinase</fullName>
        <ecNumber evidence="1">2.7.4.9</ecNumber>
    </recommendedName>
    <alternativeName>
        <fullName evidence="1">dTMP kinase</fullName>
    </alternativeName>
</protein>
<keyword id="KW-0067">ATP-binding</keyword>
<keyword id="KW-0418">Kinase</keyword>
<keyword id="KW-0545">Nucleotide biosynthesis</keyword>
<keyword id="KW-0547">Nucleotide-binding</keyword>
<keyword id="KW-0808">Transferase</keyword>
<sequence length="207" mass="23038">MFIVIEGCEGSGKSSLTELLKNRLITEGKSVIATREPGGSPLGEQVRNWILNPSLPGISPYTELFLFLASRAQHITEKIIPALESGKIVICDRFHDSTIVYQGIAEGLGKEYVTNLCHHVVGEKKFLPDLTCLLDIPVDTGIKRKQQQKSLDKFEDKPLVYHNKIREGFLSLAEANPENYLILDGRQPLEASLNKVMTAYTELALCK</sequence>
<organism>
    <name type="scientific">Chlamydia felis (strain Fe/C-56)</name>
    <name type="common">Chlamydophila felis</name>
    <dbReference type="NCBI Taxonomy" id="264202"/>
    <lineage>
        <taxon>Bacteria</taxon>
        <taxon>Pseudomonadati</taxon>
        <taxon>Chlamydiota</taxon>
        <taxon>Chlamydiia</taxon>
        <taxon>Chlamydiales</taxon>
        <taxon>Chlamydiaceae</taxon>
        <taxon>Chlamydia/Chlamydophila group</taxon>
        <taxon>Chlamydia</taxon>
    </lineage>
</organism>
<reference key="1">
    <citation type="journal article" date="2006" name="DNA Res.">
        <title>Genome sequence of the cat pathogen, Chlamydophila felis.</title>
        <authorList>
            <person name="Azuma Y."/>
            <person name="Hirakawa H."/>
            <person name="Yamashita A."/>
            <person name="Cai Y."/>
            <person name="Rahman M.A."/>
            <person name="Suzuki H."/>
            <person name="Mitaku S."/>
            <person name="Toh H."/>
            <person name="Goto S."/>
            <person name="Murakami T."/>
            <person name="Sugi K."/>
            <person name="Hayashi H."/>
            <person name="Fukushi H."/>
            <person name="Hattori M."/>
            <person name="Kuhara S."/>
            <person name="Shirai M."/>
        </authorList>
    </citation>
    <scope>NUCLEOTIDE SEQUENCE [LARGE SCALE GENOMIC DNA]</scope>
    <source>
        <strain>Fe/C-56</strain>
    </source>
</reference>
<comment type="function">
    <text evidence="1">Phosphorylation of dTMP to form dTDP in both de novo and salvage pathways of dTTP synthesis.</text>
</comment>
<comment type="catalytic activity">
    <reaction evidence="1">
        <text>dTMP + ATP = dTDP + ADP</text>
        <dbReference type="Rhea" id="RHEA:13517"/>
        <dbReference type="ChEBI" id="CHEBI:30616"/>
        <dbReference type="ChEBI" id="CHEBI:58369"/>
        <dbReference type="ChEBI" id="CHEBI:63528"/>
        <dbReference type="ChEBI" id="CHEBI:456216"/>
        <dbReference type="EC" id="2.7.4.9"/>
    </reaction>
</comment>
<comment type="similarity">
    <text evidence="1">Belongs to the thymidylate kinase family.</text>
</comment>
<accession>Q254L6</accession>